<sequence length="149" mass="17230">MHCPFCSAVDTKVIDSRLVGEGSQVRRRRQCLVCHERFTTFEVAELVMPRVIKSNEVREPFNEDKLRSGMLKALEKRPVSSDDVEMALNHIKSHLRATGEREVTTKMVGNLVMEALRKLDKVAYIRFASVYRSFEDIREFGEEIARLQD</sequence>
<accession>C6DB31</accession>
<feature type="chain" id="PRO_1000206124" description="Transcriptional repressor NrdR">
    <location>
        <begin position="1"/>
        <end position="149"/>
    </location>
</feature>
<feature type="domain" description="ATP-cone" evidence="1">
    <location>
        <begin position="49"/>
        <end position="139"/>
    </location>
</feature>
<feature type="zinc finger region" evidence="1">
    <location>
        <begin position="3"/>
        <end position="34"/>
    </location>
</feature>
<proteinExistence type="inferred from homology"/>
<gene>
    <name evidence="1" type="primary">nrdR</name>
    <name type="ordered locus">PC1_1024</name>
</gene>
<keyword id="KW-0067">ATP-binding</keyword>
<keyword id="KW-0238">DNA-binding</keyword>
<keyword id="KW-0479">Metal-binding</keyword>
<keyword id="KW-0547">Nucleotide-binding</keyword>
<keyword id="KW-0678">Repressor</keyword>
<keyword id="KW-0804">Transcription</keyword>
<keyword id="KW-0805">Transcription regulation</keyword>
<keyword id="KW-0862">Zinc</keyword>
<keyword id="KW-0863">Zinc-finger</keyword>
<name>NRDR_PECCP</name>
<protein>
    <recommendedName>
        <fullName evidence="1">Transcriptional repressor NrdR</fullName>
    </recommendedName>
</protein>
<evidence type="ECO:0000255" key="1">
    <source>
        <dbReference type="HAMAP-Rule" id="MF_00440"/>
    </source>
</evidence>
<reference key="1">
    <citation type="submission" date="2009-07" db="EMBL/GenBank/DDBJ databases">
        <title>Complete sequence of Pectobacterium carotovorum subsp. carotovorum PC1.</title>
        <authorList>
            <consortium name="US DOE Joint Genome Institute"/>
            <person name="Lucas S."/>
            <person name="Copeland A."/>
            <person name="Lapidus A."/>
            <person name="Glavina del Rio T."/>
            <person name="Tice H."/>
            <person name="Bruce D."/>
            <person name="Goodwin L."/>
            <person name="Pitluck S."/>
            <person name="Munk A.C."/>
            <person name="Brettin T."/>
            <person name="Detter J.C."/>
            <person name="Han C."/>
            <person name="Tapia R."/>
            <person name="Larimer F."/>
            <person name="Land M."/>
            <person name="Hauser L."/>
            <person name="Kyrpides N."/>
            <person name="Mikhailova N."/>
            <person name="Balakrishnan V."/>
            <person name="Glasner J."/>
            <person name="Perna N.T."/>
        </authorList>
    </citation>
    <scope>NUCLEOTIDE SEQUENCE [LARGE SCALE GENOMIC DNA]</scope>
    <source>
        <strain>PC1</strain>
    </source>
</reference>
<comment type="function">
    <text evidence="1">Negatively regulates transcription of bacterial ribonucleotide reductase nrd genes and operons by binding to NrdR-boxes.</text>
</comment>
<comment type="cofactor">
    <cofactor evidence="1">
        <name>Zn(2+)</name>
        <dbReference type="ChEBI" id="CHEBI:29105"/>
    </cofactor>
    <text evidence="1">Binds 1 zinc ion.</text>
</comment>
<comment type="similarity">
    <text evidence="1">Belongs to the NrdR family.</text>
</comment>
<organism>
    <name type="scientific">Pectobacterium carotovorum subsp. carotovorum (strain PC1)</name>
    <dbReference type="NCBI Taxonomy" id="561230"/>
    <lineage>
        <taxon>Bacteria</taxon>
        <taxon>Pseudomonadati</taxon>
        <taxon>Pseudomonadota</taxon>
        <taxon>Gammaproteobacteria</taxon>
        <taxon>Enterobacterales</taxon>
        <taxon>Pectobacteriaceae</taxon>
        <taxon>Pectobacterium</taxon>
    </lineage>
</organism>
<dbReference type="EMBL" id="CP001657">
    <property type="protein sequence ID" value="ACT12073.1"/>
    <property type="molecule type" value="Genomic_DNA"/>
</dbReference>
<dbReference type="RefSeq" id="WP_010282042.1">
    <property type="nucleotide sequence ID" value="NC_012917.1"/>
</dbReference>
<dbReference type="SMR" id="C6DB31"/>
<dbReference type="STRING" id="561230.PC1_1024"/>
<dbReference type="GeneID" id="90772279"/>
<dbReference type="KEGG" id="pct:PC1_1024"/>
<dbReference type="eggNOG" id="COG1327">
    <property type="taxonomic scope" value="Bacteria"/>
</dbReference>
<dbReference type="HOGENOM" id="CLU_108412_0_0_6"/>
<dbReference type="OrthoDB" id="9807461at2"/>
<dbReference type="Proteomes" id="UP000002736">
    <property type="component" value="Chromosome"/>
</dbReference>
<dbReference type="GO" id="GO:0005524">
    <property type="term" value="F:ATP binding"/>
    <property type="evidence" value="ECO:0007669"/>
    <property type="project" value="UniProtKB-KW"/>
</dbReference>
<dbReference type="GO" id="GO:0003677">
    <property type="term" value="F:DNA binding"/>
    <property type="evidence" value="ECO:0007669"/>
    <property type="project" value="UniProtKB-KW"/>
</dbReference>
<dbReference type="GO" id="GO:0008270">
    <property type="term" value="F:zinc ion binding"/>
    <property type="evidence" value="ECO:0007669"/>
    <property type="project" value="UniProtKB-UniRule"/>
</dbReference>
<dbReference type="GO" id="GO:0045892">
    <property type="term" value="P:negative regulation of DNA-templated transcription"/>
    <property type="evidence" value="ECO:0007669"/>
    <property type="project" value="UniProtKB-UniRule"/>
</dbReference>
<dbReference type="HAMAP" id="MF_00440">
    <property type="entry name" value="NrdR"/>
    <property type="match status" value="1"/>
</dbReference>
<dbReference type="InterPro" id="IPR005144">
    <property type="entry name" value="ATP-cone_dom"/>
</dbReference>
<dbReference type="InterPro" id="IPR055173">
    <property type="entry name" value="NrdR-like_N"/>
</dbReference>
<dbReference type="InterPro" id="IPR003796">
    <property type="entry name" value="RNR_NrdR-like"/>
</dbReference>
<dbReference type="NCBIfam" id="TIGR00244">
    <property type="entry name" value="transcriptional regulator NrdR"/>
    <property type="match status" value="1"/>
</dbReference>
<dbReference type="PANTHER" id="PTHR30455">
    <property type="entry name" value="TRANSCRIPTIONAL REPRESSOR NRDR"/>
    <property type="match status" value="1"/>
</dbReference>
<dbReference type="PANTHER" id="PTHR30455:SF2">
    <property type="entry name" value="TRANSCRIPTIONAL REPRESSOR NRDR"/>
    <property type="match status" value="1"/>
</dbReference>
<dbReference type="Pfam" id="PF03477">
    <property type="entry name" value="ATP-cone"/>
    <property type="match status" value="1"/>
</dbReference>
<dbReference type="Pfam" id="PF22811">
    <property type="entry name" value="Zn_ribbon_NrdR"/>
    <property type="match status" value="1"/>
</dbReference>
<dbReference type="PROSITE" id="PS51161">
    <property type="entry name" value="ATP_CONE"/>
    <property type="match status" value="1"/>
</dbReference>